<feature type="chain" id="PRO_1000202216" description="Leucine--tRNA ligase">
    <location>
        <begin position="1"/>
        <end position="870"/>
    </location>
</feature>
<feature type="short sequence motif" description="'HIGH' region">
    <location>
        <begin position="42"/>
        <end position="52"/>
    </location>
</feature>
<feature type="short sequence motif" description="'KMSKS' region">
    <location>
        <begin position="629"/>
        <end position="633"/>
    </location>
</feature>
<feature type="binding site" evidence="1">
    <location>
        <position position="632"/>
    </location>
    <ligand>
        <name>ATP</name>
        <dbReference type="ChEBI" id="CHEBI:30616"/>
    </ligand>
</feature>
<organism>
    <name type="scientific">Azotobacter vinelandii (strain DJ / ATCC BAA-1303)</name>
    <dbReference type="NCBI Taxonomy" id="322710"/>
    <lineage>
        <taxon>Bacteria</taxon>
        <taxon>Pseudomonadati</taxon>
        <taxon>Pseudomonadota</taxon>
        <taxon>Gammaproteobacteria</taxon>
        <taxon>Pseudomonadales</taxon>
        <taxon>Pseudomonadaceae</taxon>
        <taxon>Azotobacter</taxon>
    </lineage>
</organism>
<reference key="1">
    <citation type="journal article" date="2009" name="J. Bacteriol.">
        <title>Genome sequence of Azotobacter vinelandii, an obligate aerobe specialized to support diverse anaerobic metabolic processes.</title>
        <authorList>
            <person name="Setubal J.C."/>
            <person name="Dos Santos P."/>
            <person name="Goldman B.S."/>
            <person name="Ertesvaag H."/>
            <person name="Espin G."/>
            <person name="Rubio L.M."/>
            <person name="Valla S."/>
            <person name="Almeida N.F."/>
            <person name="Balasubramanian D."/>
            <person name="Cromes L."/>
            <person name="Curatti L."/>
            <person name="Du Z."/>
            <person name="Godsy E."/>
            <person name="Goodner B."/>
            <person name="Hellner-Burris K."/>
            <person name="Hernandez J.A."/>
            <person name="Houmiel K."/>
            <person name="Imperial J."/>
            <person name="Kennedy C."/>
            <person name="Larson T.J."/>
            <person name="Latreille P."/>
            <person name="Ligon L.S."/>
            <person name="Lu J."/>
            <person name="Maerk M."/>
            <person name="Miller N.M."/>
            <person name="Norton S."/>
            <person name="O'Carroll I.P."/>
            <person name="Paulsen I."/>
            <person name="Raulfs E.C."/>
            <person name="Roemer R."/>
            <person name="Rosser J."/>
            <person name="Segura D."/>
            <person name="Slater S."/>
            <person name="Stricklin S.L."/>
            <person name="Studholme D.J."/>
            <person name="Sun J."/>
            <person name="Viana C.J."/>
            <person name="Wallin E."/>
            <person name="Wang B."/>
            <person name="Wheeler C."/>
            <person name="Zhu H."/>
            <person name="Dean D.R."/>
            <person name="Dixon R."/>
            <person name="Wood D."/>
        </authorList>
    </citation>
    <scope>NUCLEOTIDE SEQUENCE [LARGE SCALE GENOMIC DNA]</scope>
    <source>
        <strain>DJ / ATCC BAA-1303</strain>
    </source>
</reference>
<proteinExistence type="inferred from homology"/>
<name>SYL_AZOVD</name>
<protein>
    <recommendedName>
        <fullName evidence="1">Leucine--tRNA ligase</fullName>
        <ecNumber evidence="1">6.1.1.4</ecNumber>
    </recommendedName>
    <alternativeName>
        <fullName evidence="1">Leucyl-tRNA synthetase</fullName>
        <shortName evidence="1">LeuRS</shortName>
    </alternativeName>
</protein>
<evidence type="ECO:0000255" key="1">
    <source>
        <dbReference type="HAMAP-Rule" id="MF_00049"/>
    </source>
</evidence>
<accession>C1DMV9</accession>
<keyword id="KW-0030">Aminoacyl-tRNA synthetase</keyword>
<keyword id="KW-0067">ATP-binding</keyword>
<keyword id="KW-0963">Cytoplasm</keyword>
<keyword id="KW-0436">Ligase</keyword>
<keyword id="KW-0547">Nucleotide-binding</keyword>
<keyword id="KW-0648">Protein biosynthesis</keyword>
<sequence length="870" mass="96892">MHEQYQPREIEAAAQSIWDAQKSFEVREQPGKDTFYCLSMFPYPSGKLHMGHVRNYTIGDVIARYQRMQGRNVLQPMGWDAFGMPAENAAMKNRVAPAKWTYENIAYMKSQLKSLGLGIDWSREVTTCKPDYYRWEQWLFTRLFEKGVIYRKNGTVNWDPVDQTVLANEQVIDGRGWRSGALVEKREIPMYYFRITAYAEELLQSLDSLPGWPEQVKTMQRNWIGKSYGADIVFDYDQASVGEAGQLRVYSTRPDTLMGATYVAVAAEHPLAQRAAANDPALAAFIAECKAGSVAEADMATMEKKGLATGQFVVHPLTGDRLPVFVANYVLWGYGEGAVMAVPAHDERDFEFANKYGLPIRQVYAAEGRDFSASEWQAWYADKEGLTTVDSGKYDGKSFTEAFDAIVADLEATGHGARKTQFRLRDWGISRQRYWGCPIPIIHCEACGDVPVPEEQLPVVLPEDVVPDGTGSPLAKMPEFYECACPKCGKPAKRETDTMDTFVESSWYYARYASPQYAGGMVDPQAADHWLPVDQYIGGIEHAILHLLYARFFHKLMRDEGLLSSDEPFENLLTQGMVVAETYYRTLENGGKDWFNPADVEVERDARAKVIGARLKSDGLPVEIGGTEKMSKSKNNGVDPQAMIDAYGADTCRLFMMFAAPPELSLEWSDAGVEGASRFLRRVWRLAHAHVGAGLPGTLDKARLSDAQKEIRRAIHLAIRQASQDVGQHHKFNTAIAQVMTLMNVLEKAPAADEQDRALLQEGLETVALLLAPITPHICHALWEALGKDGLIIDAAWPTVDETALVQDTLTLVVQVNGKLRGEIQVPAAASREEIEAAARANENVLRFTEGLAIRKVIVVPGKLVNIVAN</sequence>
<dbReference type="EC" id="6.1.1.4" evidence="1"/>
<dbReference type="EMBL" id="CP001157">
    <property type="protein sequence ID" value="ACO77139.1"/>
    <property type="molecule type" value="Genomic_DNA"/>
</dbReference>
<dbReference type="RefSeq" id="WP_012699564.1">
    <property type="nucleotide sequence ID" value="NC_012560.1"/>
</dbReference>
<dbReference type="SMR" id="C1DMV9"/>
<dbReference type="STRING" id="322710.Avin_09000"/>
<dbReference type="EnsemblBacteria" id="ACO77139">
    <property type="protein sequence ID" value="ACO77139"/>
    <property type="gene ID" value="Avin_09000"/>
</dbReference>
<dbReference type="GeneID" id="88184273"/>
<dbReference type="KEGG" id="avn:Avin_09000"/>
<dbReference type="eggNOG" id="COG0495">
    <property type="taxonomic scope" value="Bacteria"/>
</dbReference>
<dbReference type="HOGENOM" id="CLU_004427_0_0_6"/>
<dbReference type="OrthoDB" id="9810365at2"/>
<dbReference type="Proteomes" id="UP000002424">
    <property type="component" value="Chromosome"/>
</dbReference>
<dbReference type="GO" id="GO:0005829">
    <property type="term" value="C:cytosol"/>
    <property type="evidence" value="ECO:0007669"/>
    <property type="project" value="TreeGrafter"/>
</dbReference>
<dbReference type="GO" id="GO:0002161">
    <property type="term" value="F:aminoacyl-tRNA deacylase activity"/>
    <property type="evidence" value="ECO:0007669"/>
    <property type="project" value="InterPro"/>
</dbReference>
<dbReference type="GO" id="GO:0005524">
    <property type="term" value="F:ATP binding"/>
    <property type="evidence" value="ECO:0007669"/>
    <property type="project" value="UniProtKB-UniRule"/>
</dbReference>
<dbReference type="GO" id="GO:0004823">
    <property type="term" value="F:leucine-tRNA ligase activity"/>
    <property type="evidence" value="ECO:0007669"/>
    <property type="project" value="UniProtKB-UniRule"/>
</dbReference>
<dbReference type="GO" id="GO:0006429">
    <property type="term" value="P:leucyl-tRNA aminoacylation"/>
    <property type="evidence" value="ECO:0007669"/>
    <property type="project" value="UniProtKB-UniRule"/>
</dbReference>
<dbReference type="CDD" id="cd07958">
    <property type="entry name" value="Anticodon_Ia_Leu_BEm"/>
    <property type="match status" value="1"/>
</dbReference>
<dbReference type="CDD" id="cd00812">
    <property type="entry name" value="LeuRS_core"/>
    <property type="match status" value="1"/>
</dbReference>
<dbReference type="FunFam" id="1.10.730.10:FF:000003">
    <property type="entry name" value="Leucine--tRNA ligase"/>
    <property type="match status" value="1"/>
</dbReference>
<dbReference type="FunFam" id="2.20.28.290:FF:000001">
    <property type="entry name" value="Leucine--tRNA ligase"/>
    <property type="match status" value="1"/>
</dbReference>
<dbReference type="FunFam" id="3.10.20.590:FF:000001">
    <property type="entry name" value="Leucine--tRNA ligase"/>
    <property type="match status" value="1"/>
</dbReference>
<dbReference type="FunFam" id="3.40.50.620:FF:000003">
    <property type="entry name" value="Leucine--tRNA ligase"/>
    <property type="match status" value="1"/>
</dbReference>
<dbReference type="FunFam" id="3.40.50.620:FF:000124">
    <property type="entry name" value="Leucine--tRNA ligase"/>
    <property type="match status" value="1"/>
</dbReference>
<dbReference type="FunFam" id="3.90.740.10:FF:000012">
    <property type="entry name" value="Leucine--tRNA ligase"/>
    <property type="match status" value="1"/>
</dbReference>
<dbReference type="Gene3D" id="2.20.28.290">
    <property type="match status" value="1"/>
</dbReference>
<dbReference type="Gene3D" id="3.10.20.590">
    <property type="match status" value="1"/>
</dbReference>
<dbReference type="Gene3D" id="3.40.50.620">
    <property type="entry name" value="HUPs"/>
    <property type="match status" value="2"/>
</dbReference>
<dbReference type="Gene3D" id="1.10.730.10">
    <property type="entry name" value="Isoleucyl-tRNA Synthetase, Domain 1"/>
    <property type="match status" value="1"/>
</dbReference>
<dbReference type="HAMAP" id="MF_00049_B">
    <property type="entry name" value="Leu_tRNA_synth_B"/>
    <property type="match status" value="1"/>
</dbReference>
<dbReference type="InterPro" id="IPR001412">
    <property type="entry name" value="aa-tRNA-synth_I_CS"/>
</dbReference>
<dbReference type="InterPro" id="IPR002300">
    <property type="entry name" value="aa-tRNA-synth_Ia"/>
</dbReference>
<dbReference type="InterPro" id="IPR002302">
    <property type="entry name" value="Leu-tRNA-ligase"/>
</dbReference>
<dbReference type="InterPro" id="IPR025709">
    <property type="entry name" value="Leu_tRNA-synth_edit"/>
</dbReference>
<dbReference type="InterPro" id="IPR013155">
    <property type="entry name" value="M/V/L/I-tRNA-synth_anticd-bd"/>
</dbReference>
<dbReference type="InterPro" id="IPR015413">
    <property type="entry name" value="Methionyl/Leucyl_tRNA_Synth"/>
</dbReference>
<dbReference type="InterPro" id="IPR014729">
    <property type="entry name" value="Rossmann-like_a/b/a_fold"/>
</dbReference>
<dbReference type="InterPro" id="IPR009080">
    <property type="entry name" value="tRNAsynth_Ia_anticodon-bd"/>
</dbReference>
<dbReference type="InterPro" id="IPR009008">
    <property type="entry name" value="Val/Leu/Ile-tRNA-synth_edit"/>
</dbReference>
<dbReference type="NCBIfam" id="TIGR00396">
    <property type="entry name" value="leuS_bact"/>
    <property type="match status" value="1"/>
</dbReference>
<dbReference type="PANTHER" id="PTHR43740:SF2">
    <property type="entry name" value="LEUCINE--TRNA LIGASE, MITOCHONDRIAL"/>
    <property type="match status" value="1"/>
</dbReference>
<dbReference type="PANTHER" id="PTHR43740">
    <property type="entry name" value="LEUCYL-TRNA SYNTHETASE"/>
    <property type="match status" value="1"/>
</dbReference>
<dbReference type="Pfam" id="PF08264">
    <property type="entry name" value="Anticodon_1"/>
    <property type="match status" value="1"/>
</dbReference>
<dbReference type="Pfam" id="PF00133">
    <property type="entry name" value="tRNA-synt_1"/>
    <property type="match status" value="2"/>
</dbReference>
<dbReference type="Pfam" id="PF13603">
    <property type="entry name" value="tRNA-synt_1_2"/>
    <property type="match status" value="1"/>
</dbReference>
<dbReference type="Pfam" id="PF09334">
    <property type="entry name" value="tRNA-synt_1g"/>
    <property type="match status" value="1"/>
</dbReference>
<dbReference type="PRINTS" id="PR00985">
    <property type="entry name" value="TRNASYNTHLEU"/>
</dbReference>
<dbReference type="SUPFAM" id="SSF47323">
    <property type="entry name" value="Anticodon-binding domain of a subclass of class I aminoacyl-tRNA synthetases"/>
    <property type="match status" value="1"/>
</dbReference>
<dbReference type="SUPFAM" id="SSF52374">
    <property type="entry name" value="Nucleotidylyl transferase"/>
    <property type="match status" value="1"/>
</dbReference>
<dbReference type="SUPFAM" id="SSF50677">
    <property type="entry name" value="ValRS/IleRS/LeuRS editing domain"/>
    <property type="match status" value="1"/>
</dbReference>
<dbReference type="PROSITE" id="PS00178">
    <property type="entry name" value="AA_TRNA_LIGASE_I"/>
    <property type="match status" value="1"/>
</dbReference>
<comment type="catalytic activity">
    <reaction evidence="1">
        <text>tRNA(Leu) + L-leucine + ATP = L-leucyl-tRNA(Leu) + AMP + diphosphate</text>
        <dbReference type="Rhea" id="RHEA:11688"/>
        <dbReference type="Rhea" id="RHEA-COMP:9613"/>
        <dbReference type="Rhea" id="RHEA-COMP:9622"/>
        <dbReference type="ChEBI" id="CHEBI:30616"/>
        <dbReference type="ChEBI" id="CHEBI:33019"/>
        <dbReference type="ChEBI" id="CHEBI:57427"/>
        <dbReference type="ChEBI" id="CHEBI:78442"/>
        <dbReference type="ChEBI" id="CHEBI:78494"/>
        <dbReference type="ChEBI" id="CHEBI:456215"/>
        <dbReference type="EC" id="6.1.1.4"/>
    </reaction>
</comment>
<comment type="subcellular location">
    <subcellularLocation>
        <location evidence="1">Cytoplasm</location>
    </subcellularLocation>
</comment>
<comment type="similarity">
    <text evidence="1">Belongs to the class-I aminoacyl-tRNA synthetase family.</text>
</comment>
<gene>
    <name evidence="1" type="primary">leuS</name>
    <name type="ordered locus">Avin_09000</name>
</gene>